<protein>
    <recommendedName>
        <fullName>DNA replication complex GINS protein PSF2</fullName>
    </recommendedName>
</protein>
<evidence type="ECO:0000250" key="1"/>
<evidence type="ECO:0000256" key="2">
    <source>
        <dbReference type="SAM" id="MobiDB-lite"/>
    </source>
</evidence>
<evidence type="ECO:0000305" key="3"/>
<sequence>MSVPAEQLETFLPSELHFMAENETIEILPRRVGNPIKLAGTDLPLMHPLRKNRVPIWMAIALKKQQRCQFVPPDWMEESNLRRILAFEHANPTAFSNVDFHWLEIAQIVLTTAPDDLTSPPQVIRNLVRDIREVREQKSRQGMKEVNENMLQMDRLGALEINEMRPFVVEGMEEMIKIRKAGKKEEPIIYSESDNPEDDEDDEPTYGHDDESSLAVPSSQLDSSLRYGDRVDTSERRRELSQWDDNVPQQGGPEW</sequence>
<name>PSF2_YARLI</name>
<proteinExistence type="inferred from homology"/>
<reference key="1">
    <citation type="journal article" date="2004" name="Nature">
        <title>Genome evolution in yeasts.</title>
        <authorList>
            <person name="Dujon B."/>
            <person name="Sherman D."/>
            <person name="Fischer G."/>
            <person name="Durrens P."/>
            <person name="Casaregola S."/>
            <person name="Lafontaine I."/>
            <person name="de Montigny J."/>
            <person name="Marck C."/>
            <person name="Neuveglise C."/>
            <person name="Talla E."/>
            <person name="Goffard N."/>
            <person name="Frangeul L."/>
            <person name="Aigle M."/>
            <person name="Anthouard V."/>
            <person name="Babour A."/>
            <person name="Barbe V."/>
            <person name="Barnay S."/>
            <person name="Blanchin S."/>
            <person name="Beckerich J.-M."/>
            <person name="Beyne E."/>
            <person name="Bleykasten C."/>
            <person name="Boisrame A."/>
            <person name="Boyer J."/>
            <person name="Cattolico L."/>
            <person name="Confanioleri F."/>
            <person name="de Daruvar A."/>
            <person name="Despons L."/>
            <person name="Fabre E."/>
            <person name="Fairhead C."/>
            <person name="Ferry-Dumazet H."/>
            <person name="Groppi A."/>
            <person name="Hantraye F."/>
            <person name="Hennequin C."/>
            <person name="Jauniaux N."/>
            <person name="Joyet P."/>
            <person name="Kachouri R."/>
            <person name="Kerrest A."/>
            <person name="Koszul R."/>
            <person name="Lemaire M."/>
            <person name="Lesur I."/>
            <person name="Ma L."/>
            <person name="Muller H."/>
            <person name="Nicaud J.-M."/>
            <person name="Nikolski M."/>
            <person name="Oztas S."/>
            <person name="Ozier-Kalogeropoulos O."/>
            <person name="Pellenz S."/>
            <person name="Potier S."/>
            <person name="Richard G.-F."/>
            <person name="Straub M.-L."/>
            <person name="Suleau A."/>
            <person name="Swennen D."/>
            <person name="Tekaia F."/>
            <person name="Wesolowski-Louvel M."/>
            <person name="Westhof E."/>
            <person name="Wirth B."/>
            <person name="Zeniou-Meyer M."/>
            <person name="Zivanovic Y."/>
            <person name="Bolotin-Fukuhara M."/>
            <person name="Thierry A."/>
            <person name="Bouchier C."/>
            <person name="Caudron B."/>
            <person name="Scarpelli C."/>
            <person name="Gaillardin C."/>
            <person name="Weissenbach J."/>
            <person name="Wincker P."/>
            <person name="Souciet J.-L."/>
        </authorList>
    </citation>
    <scope>NUCLEOTIDE SEQUENCE [LARGE SCALE GENOMIC DNA]</scope>
    <source>
        <strain>CLIB 122 / E 150</strain>
    </source>
</reference>
<keyword id="KW-0159">Chromosome partition</keyword>
<keyword id="KW-0235">DNA replication</keyword>
<keyword id="KW-0539">Nucleus</keyword>
<keyword id="KW-1185">Reference proteome</keyword>
<dbReference type="EMBL" id="CR382131">
    <property type="protein sequence ID" value="CAG79593.1"/>
    <property type="molecule type" value="Genomic_DNA"/>
</dbReference>
<dbReference type="RefSeq" id="XP_504000.1">
    <property type="nucleotide sequence ID" value="XM_504000.1"/>
</dbReference>
<dbReference type="SMR" id="Q6C5R2"/>
<dbReference type="FunCoup" id="Q6C5R2">
    <property type="interactions" value="724"/>
</dbReference>
<dbReference type="STRING" id="284591.Q6C5R2"/>
<dbReference type="EnsemblFungi" id="CAG79593">
    <property type="protein sequence ID" value="CAG79593"/>
    <property type="gene ID" value="YALI0_E15884g"/>
</dbReference>
<dbReference type="KEGG" id="yli:2911570"/>
<dbReference type="VEuPathDB" id="FungiDB:YALI0_E15884g"/>
<dbReference type="HOGENOM" id="CLU_078274_1_1_1"/>
<dbReference type="InParanoid" id="Q6C5R2"/>
<dbReference type="OMA" id="GPYYMEL"/>
<dbReference type="OrthoDB" id="3681at4891"/>
<dbReference type="Proteomes" id="UP000001300">
    <property type="component" value="Chromosome E"/>
</dbReference>
<dbReference type="GO" id="GO:0000785">
    <property type="term" value="C:chromatin"/>
    <property type="evidence" value="ECO:0007669"/>
    <property type="project" value="EnsemblFungi"/>
</dbReference>
<dbReference type="GO" id="GO:0000811">
    <property type="term" value="C:GINS complex"/>
    <property type="evidence" value="ECO:0000318"/>
    <property type="project" value="GO_Central"/>
</dbReference>
<dbReference type="GO" id="GO:0007059">
    <property type="term" value="P:chromosome segregation"/>
    <property type="evidence" value="ECO:0007669"/>
    <property type="project" value="UniProtKB-KW"/>
</dbReference>
<dbReference type="GO" id="GO:0000727">
    <property type="term" value="P:double-strand break repair via break-induced replication"/>
    <property type="evidence" value="ECO:0000318"/>
    <property type="project" value="GO_Central"/>
</dbReference>
<dbReference type="GO" id="GO:0033260">
    <property type="term" value="P:nuclear DNA replication"/>
    <property type="evidence" value="ECO:0007669"/>
    <property type="project" value="EnsemblFungi"/>
</dbReference>
<dbReference type="CDD" id="cd11712">
    <property type="entry name" value="GINS_A_psf2"/>
    <property type="match status" value="1"/>
</dbReference>
<dbReference type="CDD" id="cd21694">
    <property type="entry name" value="GINS_B_Psf2"/>
    <property type="match status" value="1"/>
</dbReference>
<dbReference type="FunFam" id="1.20.58.1020:FF:000001">
    <property type="entry name" value="DNA replication complex GINS protein PSF2"/>
    <property type="match status" value="1"/>
</dbReference>
<dbReference type="FunFam" id="3.40.5.50:FF:000001">
    <property type="entry name" value="DNA replication complex GINS protein PSF2"/>
    <property type="match status" value="1"/>
</dbReference>
<dbReference type="Gene3D" id="1.20.58.1020">
    <property type="match status" value="1"/>
</dbReference>
<dbReference type="Gene3D" id="3.40.5.50">
    <property type="match status" value="1"/>
</dbReference>
<dbReference type="InterPro" id="IPR021151">
    <property type="entry name" value="GINS_A"/>
</dbReference>
<dbReference type="InterPro" id="IPR036224">
    <property type="entry name" value="GINS_bundle-like_dom_sf"/>
</dbReference>
<dbReference type="InterPro" id="IPR007257">
    <property type="entry name" value="GINS_Psf2"/>
</dbReference>
<dbReference type="InterPro" id="IPR056784">
    <property type="entry name" value="PSF2_N"/>
</dbReference>
<dbReference type="PANTHER" id="PTHR12772">
    <property type="entry name" value="DNA REPLICATION COMPLEX GINS PROTEIN PSF2"/>
    <property type="match status" value="1"/>
</dbReference>
<dbReference type="PANTHER" id="PTHR12772:SF0">
    <property type="entry name" value="DNA REPLICATION COMPLEX GINS PROTEIN PSF2"/>
    <property type="match status" value="1"/>
</dbReference>
<dbReference type="Pfam" id="PF25005">
    <property type="entry name" value="PSF2_N"/>
    <property type="match status" value="1"/>
</dbReference>
<dbReference type="Pfam" id="PF05916">
    <property type="entry name" value="Sld5"/>
    <property type="match status" value="1"/>
</dbReference>
<dbReference type="PIRSF" id="PIRSF028998">
    <property type="entry name" value="GINS_Psf2_subgr"/>
    <property type="match status" value="1"/>
</dbReference>
<dbReference type="SUPFAM" id="SSF158573">
    <property type="entry name" value="GINS helical bundle-like"/>
    <property type="match status" value="1"/>
</dbReference>
<dbReference type="SUPFAM" id="SSF160059">
    <property type="entry name" value="PriA/YqbF domain"/>
    <property type="match status" value="1"/>
</dbReference>
<gene>
    <name type="primary">PSF2</name>
    <name type="ordered locus">YALI0E15884g</name>
</gene>
<accession>Q6C5R2</accession>
<comment type="function">
    <text evidence="1">The GINS complex plays an essential role in the initiation of DNA replication. Has a role in chromosome segregation (By similarity).</text>
</comment>
<comment type="subunit">
    <text evidence="1">Component of the GINS complex which is a heterotetramer of SLD5, PSF1, PSF2 and PSF3.</text>
</comment>
<comment type="subcellular location">
    <subcellularLocation>
        <location evidence="1">Nucleus</location>
    </subcellularLocation>
</comment>
<comment type="similarity">
    <text evidence="3">Belongs to the GINS2/PSF2 family.</text>
</comment>
<organism>
    <name type="scientific">Yarrowia lipolytica (strain CLIB 122 / E 150)</name>
    <name type="common">Yeast</name>
    <name type="synonym">Candida lipolytica</name>
    <dbReference type="NCBI Taxonomy" id="284591"/>
    <lineage>
        <taxon>Eukaryota</taxon>
        <taxon>Fungi</taxon>
        <taxon>Dikarya</taxon>
        <taxon>Ascomycota</taxon>
        <taxon>Saccharomycotina</taxon>
        <taxon>Dipodascomycetes</taxon>
        <taxon>Dipodascales</taxon>
        <taxon>Dipodascales incertae sedis</taxon>
        <taxon>Yarrowia</taxon>
    </lineage>
</organism>
<feature type="chain" id="PRO_0000255427" description="DNA replication complex GINS protein PSF2">
    <location>
        <begin position="1"/>
        <end position="255"/>
    </location>
</feature>
<feature type="region of interest" description="Disordered" evidence="2">
    <location>
        <begin position="187"/>
        <end position="255"/>
    </location>
</feature>
<feature type="compositionally biased region" description="Acidic residues" evidence="2">
    <location>
        <begin position="194"/>
        <end position="204"/>
    </location>
</feature>
<feature type="compositionally biased region" description="Basic and acidic residues" evidence="2">
    <location>
        <begin position="227"/>
        <end position="241"/>
    </location>
</feature>